<keyword id="KW-0050">Antiport</keyword>
<keyword id="KW-0997">Cell inner membrane</keyword>
<keyword id="KW-1003">Cell membrane</keyword>
<keyword id="KW-0406">Ion transport</keyword>
<keyword id="KW-0472">Membrane</keyword>
<keyword id="KW-0915">Sodium</keyword>
<keyword id="KW-0739">Sodium transport</keyword>
<keyword id="KW-0812">Transmembrane</keyword>
<keyword id="KW-1133">Transmembrane helix</keyword>
<keyword id="KW-0813">Transport</keyword>
<dbReference type="EMBL" id="CU928164">
    <property type="protein sequence ID" value="CAR17526.1"/>
    <property type="molecule type" value="Genomic_DNA"/>
</dbReference>
<dbReference type="RefSeq" id="WP_001174942.1">
    <property type="nucleotide sequence ID" value="NC_011750.1"/>
</dbReference>
<dbReference type="RefSeq" id="YP_002407398.1">
    <property type="nucleotide sequence ID" value="NC_011750.1"/>
</dbReference>
<dbReference type="SMR" id="B7NTX0"/>
<dbReference type="STRING" id="585057.ECIAI39_1393"/>
<dbReference type="GeneID" id="75204509"/>
<dbReference type="KEGG" id="ect:ECIAI39_1393"/>
<dbReference type="PATRIC" id="fig|585057.6.peg.1456"/>
<dbReference type="HOGENOM" id="CLU_012893_6_0_6"/>
<dbReference type="Proteomes" id="UP000000749">
    <property type="component" value="Chromosome"/>
</dbReference>
<dbReference type="GO" id="GO:0005886">
    <property type="term" value="C:plasma membrane"/>
    <property type="evidence" value="ECO:0007669"/>
    <property type="project" value="UniProtKB-SubCell"/>
</dbReference>
<dbReference type="GO" id="GO:0015297">
    <property type="term" value="F:antiporter activity"/>
    <property type="evidence" value="ECO:0007669"/>
    <property type="project" value="UniProtKB-UniRule"/>
</dbReference>
<dbReference type="GO" id="GO:0042910">
    <property type="term" value="F:xenobiotic transmembrane transporter activity"/>
    <property type="evidence" value="ECO:0007669"/>
    <property type="project" value="UniProtKB-UniRule"/>
</dbReference>
<dbReference type="GO" id="GO:0006814">
    <property type="term" value="P:sodium ion transport"/>
    <property type="evidence" value="ECO:0007669"/>
    <property type="project" value="UniProtKB-UniRule"/>
</dbReference>
<dbReference type="GO" id="GO:0006855">
    <property type="term" value="P:xenobiotic transmembrane transport"/>
    <property type="evidence" value="ECO:0007669"/>
    <property type="project" value="UniProtKB-UniRule"/>
</dbReference>
<dbReference type="CDD" id="cd13131">
    <property type="entry name" value="MATE_NorM_like"/>
    <property type="match status" value="1"/>
</dbReference>
<dbReference type="HAMAP" id="MF_00400">
    <property type="entry name" value="MdtK"/>
    <property type="match status" value="1"/>
</dbReference>
<dbReference type="InterPro" id="IPR002528">
    <property type="entry name" value="MATE_fam"/>
</dbReference>
<dbReference type="InterPro" id="IPR050222">
    <property type="entry name" value="MATE_MdtK"/>
</dbReference>
<dbReference type="InterPro" id="IPR048279">
    <property type="entry name" value="MdtK-like"/>
</dbReference>
<dbReference type="InterPro" id="IPR022913">
    <property type="entry name" value="Multidrug-R_MdtK"/>
</dbReference>
<dbReference type="NCBIfam" id="TIGR00797">
    <property type="entry name" value="matE"/>
    <property type="match status" value="1"/>
</dbReference>
<dbReference type="PANTHER" id="PTHR43298:SF2">
    <property type="entry name" value="FMN_FAD EXPORTER YEEO-RELATED"/>
    <property type="match status" value="1"/>
</dbReference>
<dbReference type="PANTHER" id="PTHR43298">
    <property type="entry name" value="MULTIDRUG RESISTANCE PROTEIN NORM-RELATED"/>
    <property type="match status" value="1"/>
</dbReference>
<dbReference type="Pfam" id="PF01554">
    <property type="entry name" value="MatE"/>
    <property type="match status" value="2"/>
</dbReference>
<dbReference type="PIRSF" id="PIRSF006603">
    <property type="entry name" value="DinF"/>
    <property type="match status" value="1"/>
</dbReference>
<comment type="function">
    <text evidence="1">Multidrug efflux pump that functions probably as a Na(+)/drug antiporter.</text>
</comment>
<comment type="subcellular location">
    <subcellularLocation>
        <location evidence="1">Cell inner membrane</location>
        <topology evidence="1">Multi-pass membrane protein</topology>
    </subcellularLocation>
</comment>
<comment type="similarity">
    <text evidence="1">Belongs to the multi antimicrobial extrusion (MATE) (TC 2.A.66.1) family. MdtK subfamily.</text>
</comment>
<organism>
    <name type="scientific">Escherichia coli O7:K1 (strain IAI39 / ExPEC)</name>
    <dbReference type="NCBI Taxonomy" id="585057"/>
    <lineage>
        <taxon>Bacteria</taxon>
        <taxon>Pseudomonadati</taxon>
        <taxon>Pseudomonadota</taxon>
        <taxon>Gammaproteobacteria</taxon>
        <taxon>Enterobacterales</taxon>
        <taxon>Enterobacteriaceae</taxon>
        <taxon>Escherichia</taxon>
    </lineage>
</organism>
<accession>B7NTX0</accession>
<protein>
    <recommendedName>
        <fullName evidence="1">Multidrug resistance protein MdtK</fullName>
    </recommendedName>
    <alternativeName>
        <fullName evidence="1">Multidrug-efflux transporter</fullName>
    </alternativeName>
</protein>
<sequence length="457" mass="49475">MQKYISEARLLLALAIPVILAQIAQTAMGFVDTVMAGGYSATDMAAVAIGTSIWLPAILFGHGLLLALTPVIAQLNGSGRRERIAHQVRQGFWLAGFVSVLIMLVLWNAGYIIRSMENIDPALADKAVGYLRALLWGAPGYLFFQVARNQCEGLAKTKPGMVMGFIGLLVNIPVNYIFIYGHFGMPELGGVGCGVATAAVYWVMFLAMVSYIKRARSMRDIRNEKGTAKPDPAVMKRLIQLGLPIALALFFEVTLFAVVALLVSPLGIVDVAGHQIALNFSSLMFVLPMSLAAAVTIRVGYRLGQGSTLDAQTAARTGLMVGVCMATLTAIFTVSLREQIALLYNDNPEVVTLAAHLMLLAAVYQISDSIQVIGSGILRGYKDTRSIFYITFTAYWVLGLPSGYILALTDLVVEPMGPAGFWIGFIIGLTSAAIMMMLRMRFLQRLPSVIILQRASR</sequence>
<name>MDTK_ECO7I</name>
<gene>
    <name evidence="1" type="primary">mdtK</name>
    <name type="ordered locus">ECIAI39_1393</name>
</gene>
<evidence type="ECO:0000255" key="1">
    <source>
        <dbReference type="HAMAP-Rule" id="MF_00400"/>
    </source>
</evidence>
<proteinExistence type="inferred from homology"/>
<reference key="1">
    <citation type="journal article" date="2009" name="PLoS Genet.">
        <title>Organised genome dynamics in the Escherichia coli species results in highly diverse adaptive paths.</title>
        <authorList>
            <person name="Touchon M."/>
            <person name="Hoede C."/>
            <person name="Tenaillon O."/>
            <person name="Barbe V."/>
            <person name="Baeriswyl S."/>
            <person name="Bidet P."/>
            <person name="Bingen E."/>
            <person name="Bonacorsi S."/>
            <person name="Bouchier C."/>
            <person name="Bouvet O."/>
            <person name="Calteau A."/>
            <person name="Chiapello H."/>
            <person name="Clermont O."/>
            <person name="Cruveiller S."/>
            <person name="Danchin A."/>
            <person name="Diard M."/>
            <person name="Dossat C."/>
            <person name="Karoui M.E."/>
            <person name="Frapy E."/>
            <person name="Garry L."/>
            <person name="Ghigo J.M."/>
            <person name="Gilles A.M."/>
            <person name="Johnson J."/>
            <person name="Le Bouguenec C."/>
            <person name="Lescat M."/>
            <person name="Mangenot S."/>
            <person name="Martinez-Jehanne V."/>
            <person name="Matic I."/>
            <person name="Nassif X."/>
            <person name="Oztas S."/>
            <person name="Petit M.A."/>
            <person name="Pichon C."/>
            <person name="Rouy Z."/>
            <person name="Ruf C.S."/>
            <person name="Schneider D."/>
            <person name="Tourret J."/>
            <person name="Vacherie B."/>
            <person name="Vallenet D."/>
            <person name="Medigue C."/>
            <person name="Rocha E.P.C."/>
            <person name="Denamur E."/>
        </authorList>
    </citation>
    <scope>NUCLEOTIDE SEQUENCE [LARGE SCALE GENOMIC DNA]</scope>
    <source>
        <strain>IAI39 / ExPEC</strain>
    </source>
</reference>
<feature type="chain" id="PRO_1000191095" description="Multidrug resistance protein MdtK">
    <location>
        <begin position="1"/>
        <end position="457"/>
    </location>
</feature>
<feature type="transmembrane region" description="Helical" evidence="1">
    <location>
        <begin position="11"/>
        <end position="31"/>
    </location>
</feature>
<feature type="transmembrane region" description="Helical" evidence="1">
    <location>
        <begin position="53"/>
        <end position="73"/>
    </location>
</feature>
<feature type="transmembrane region" description="Helical" evidence="1">
    <location>
        <begin position="93"/>
        <end position="113"/>
    </location>
</feature>
<feature type="transmembrane region" description="Helical" evidence="1">
    <location>
        <begin position="127"/>
        <end position="147"/>
    </location>
</feature>
<feature type="transmembrane region" description="Helical" evidence="1">
    <location>
        <begin position="160"/>
        <end position="180"/>
    </location>
</feature>
<feature type="transmembrane region" description="Helical" evidence="1">
    <location>
        <begin position="189"/>
        <end position="209"/>
    </location>
</feature>
<feature type="transmembrane region" description="Helical" evidence="1">
    <location>
        <begin position="243"/>
        <end position="263"/>
    </location>
</feature>
<feature type="transmembrane region" description="Helical" evidence="1">
    <location>
        <begin position="276"/>
        <end position="296"/>
    </location>
</feature>
<feature type="transmembrane region" description="Helical" evidence="1">
    <location>
        <begin position="314"/>
        <end position="334"/>
    </location>
</feature>
<feature type="transmembrane region" description="Helical" evidence="1">
    <location>
        <begin position="350"/>
        <end position="370"/>
    </location>
</feature>
<feature type="transmembrane region" description="Helical" evidence="1">
    <location>
        <begin position="387"/>
        <end position="407"/>
    </location>
</feature>
<feature type="transmembrane region" description="Helical" evidence="1">
    <location>
        <begin position="418"/>
        <end position="438"/>
    </location>
</feature>